<evidence type="ECO:0000255" key="1">
    <source>
        <dbReference type="HAMAP-Rule" id="MF_00301"/>
    </source>
</evidence>
<name>KHSE_ACICJ</name>
<keyword id="KW-0028">Amino-acid biosynthesis</keyword>
<keyword id="KW-0067">ATP-binding</keyword>
<keyword id="KW-0418">Kinase</keyword>
<keyword id="KW-0547">Nucleotide-binding</keyword>
<keyword id="KW-1185">Reference proteome</keyword>
<keyword id="KW-0791">Threonine biosynthesis</keyword>
<keyword id="KW-0808">Transferase</keyword>
<comment type="catalytic activity">
    <reaction evidence="1">
        <text>L-homoserine + ATP = O-phospho-L-homoserine + ADP + H(+)</text>
        <dbReference type="Rhea" id="RHEA:13985"/>
        <dbReference type="ChEBI" id="CHEBI:15378"/>
        <dbReference type="ChEBI" id="CHEBI:30616"/>
        <dbReference type="ChEBI" id="CHEBI:57476"/>
        <dbReference type="ChEBI" id="CHEBI:57590"/>
        <dbReference type="ChEBI" id="CHEBI:456216"/>
        <dbReference type="EC" id="2.7.1.39"/>
    </reaction>
</comment>
<comment type="pathway">
    <text evidence="1">Amino-acid biosynthesis; L-threonine biosynthesis; L-threonine from L-aspartate: step 4/5.</text>
</comment>
<comment type="similarity">
    <text evidence="1">Belongs to the pseudomonas-type ThrB family.</text>
</comment>
<protein>
    <recommendedName>
        <fullName evidence="1">Homoserine kinase</fullName>
        <shortName evidence="1">HK</shortName>
        <shortName evidence="1">HSK</shortName>
        <ecNumber evidence="1">2.7.1.39</ecNumber>
    </recommendedName>
</protein>
<dbReference type="EC" id="2.7.1.39" evidence="1"/>
<dbReference type="EMBL" id="CP000697">
    <property type="protein sequence ID" value="ABQ30857.1"/>
    <property type="molecule type" value="Genomic_DNA"/>
</dbReference>
<dbReference type="RefSeq" id="WP_011942400.1">
    <property type="nucleotide sequence ID" value="NC_009484.1"/>
</dbReference>
<dbReference type="SMR" id="A5FZ25"/>
<dbReference type="STRING" id="349163.Acry_1652"/>
<dbReference type="KEGG" id="acr:Acry_1652"/>
<dbReference type="eggNOG" id="COG2334">
    <property type="taxonomic scope" value="Bacteria"/>
</dbReference>
<dbReference type="HOGENOM" id="CLU_053300_1_0_5"/>
<dbReference type="UniPathway" id="UPA00050">
    <property type="reaction ID" value="UER00064"/>
</dbReference>
<dbReference type="Proteomes" id="UP000000245">
    <property type="component" value="Chromosome"/>
</dbReference>
<dbReference type="GO" id="GO:0005524">
    <property type="term" value="F:ATP binding"/>
    <property type="evidence" value="ECO:0007669"/>
    <property type="project" value="UniProtKB-KW"/>
</dbReference>
<dbReference type="GO" id="GO:0004413">
    <property type="term" value="F:homoserine kinase activity"/>
    <property type="evidence" value="ECO:0007669"/>
    <property type="project" value="UniProtKB-UniRule"/>
</dbReference>
<dbReference type="GO" id="GO:0009088">
    <property type="term" value="P:threonine biosynthetic process"/>
    <property type="evidence" value="ECO:0007669"/>
    <property type="project" value="UniProtKB-UniRule"/>
</dbReference>
<dbReference type="CDD" id="cd05153">
    <property type="entry name" value="HomoserineK_II"/>
    <property type="match status" value="1"/>
</dbReference>
<dbReference type="Gene3D" id="3.90.1200.10">
    <property type="match status" value="1"/>
</dbReference>
<dbReference type="Gene3D" id="3.30.200.20">
    <property type="entry name" value="Phosphorylase Kinase, domain 1"/>
    <property type="match status" value="1"/>
</dbReference>
<dbReference type="HAMAP" id="MF_00301">
    <property type="entry name" value="Homoser_kinase_2"/>
    <property type="match status" value="1"/>
</dbReference>
<dbReference type="InterPro" id="IPR002575">
    <property type="entry name" value="Aminoglycoside_PTrfase"/>
</dbReference>
<dbReference type="InterPro" id="IPR005280">
    <property type="entry name" value="Homoserine_kinase_II"/>
</dbReference>
<dbReference type="InterPro" id="IPR011009">
    <property type="entry name" value="Kinase-like_dom_sf"/>
</dbReference>
<dbReference type="InterPro" id="IPR050249">
    <property type="entry name" value="Pseudomonas-type_ThrB"/>
</dbReference>
<dbReference type="NCBIfam" id="NF003558">
    <property type="entry name" value="PRK05231.1"/>
    <property type="match status" value="1"/>
</dbReference>
<dbReference type="NCBIfam" id="TIGR00938">
    <property type="entry name" value="thrB_alt"/>
    <property type="match status" value="1"/>
</dbReference>
<dbReference type="PANTHER" id="PTHR21064:SF6">
    <property type="entry name" value="AMINOGLYCOSIDE PHOSPHOTRANSFERASE DOMAIN-CONTAINING PROTEIN"/>
    <property type="match status" value="1"/>
</dbReference>
<dbReference type="PANTHER" id="PTHR21064">
    <property type="entry name" value="AMINOGLYCOSIDE PHOSPHOTRANSFERASE DOMAIN-CONTAINING PROTEIN-RELATED"/>
    <property type="match status" value="1"/>
</dbReference>
<dbReference type="Pfam" id="PF01636">
    <property type="entry name" value="APH"/>
    <property type="match status" value="1"/>
</dbReference>
<dbReference type="SUPFAM" id="SSF56112">
    <property type="entry name" value="Protein kinase-like (PK-like)"/>
    <property type="match status" value="1"/>
</dbReference>
<gene>
    <name evidence="1" type="primary">thrB</name>
    <name type="ordered locus">Acry_1652</name>
</gene>
<reference key="1">
    <citation type="submission" date="2007-05" db="EMBL/GenBank/DDBJ databases">
        <title>Complete sequence of chromosome of Acidiphilium cryptum JF-5.</title>
        <authorList>
            <consortium name="US DOE Joint Genome Institute"/>
            <person name="Copeland A."/>
            <person name="Lucas S."/>
            <person name="Lapidus A."/>
            <person name="Barry K."/>
            <person name="Detter J.C."/>
            <person name="Glavina del Rio T."/>
            <person name="Hammon N."/>
            <person name="Israni S."/>
            <person name="Dalin E."/>
            <person name="Tice H."/>
            <person name="Pitluck S."/>
            <person name="Sims D."/>
            <person name="Brettin T."/>
            <person name="Bruce D."/>
            <person name="Han C."/>
            <person name="Schmutz J."/>
            <person name="Larimer F."/>
            <person name="Land M."/>
            <person name="Hauser L."/>
            <person name="Kyrpides N."/>
            <person name="Kim E."/>
            <person name="Magnuson T."/>
            <person name="Richardson P."/>
        </authorList>
    </citation>
    <scope>NUCLEOTIDE SEQUENCE [LARGE SCALE GENOMIC DNA]</scope>
    <source>
        <strain>JF-5</strain>
    </source>
</reference>
<proteinExistence type="inferred from homology"/>
<accession>A5FZ25</accession>
<sequence>MAVYTEVTDDALAAFLEGYDIGRMVAFRGIAEGVENSNYSLRTTEGDFILTLYERRVDPADLPWFLGLMEHLAAKSLPCPLPVRARDGANLNPLAGRIAAITTFLPGVWPRRPTVAHCGPLGAAMARMHLAGEDYAPTRANALGPQGWPPLLARCGDSGDAVRPGLTGEVRTALDATLAAWPGALPRGHIHADLFPDNVFFLDHAISGLIDFYFAATDLYAYDIAVCLNAWCFEPDFSFNITKSRALLRGYQAVRPLSAAETEALPVLCRGAAIRFLLTRLYDWINTPDDALVTRKDPLDYYWRLRFHLQAGSAADYGV</sequence>
<feature type="chain" id="PRO_1000022574" description="Homoserine kinase">
    <location>
        <begin position="1"/>
        <end position="319"/>
    </location>
</feature>
<organism>
    <name type="scientific">Acidiphilium cryptum (strain JF-5)</name>
    <dbReference type="NCBI Taxonomy" id="349163"/>
    <lineage>
        <taxon>Bacteria</taxon>
        <taxon>Pseudomonadati</taxon>
        <taxon>Pseudomonadota</taxon>
        <taxon>Alphaproteobacteria</taxon>
        <taxon>Acetobacterales</taxon>
        <taxon>Acidocellaceae</taxon>
        <taxon>Acidiphilium</taxon>
    </lineage>
</organism>